<organism>
    <name type="scientific">Saccharomyces cerevisiae (strain ATCC 204508 / S288c)</name>
    <name type="common">Baker's yeast</name>
    <dbReference type="NCBI Taxonomy" id="559292"/>
    <lineage>
        <taxon>Eukaryota</taxon>
        <taxon>Fungi</taxon>
        <taxon>Dikarya</taxon>
        <taxon>Ascomycota</taxon>
        <taxon>Saccharomycotina</taxon>
        <taxon>Saccharomycetes</taxon>
        <taxon>Saccharomycetales</taxon>
        <taxon>Saccharomycetaceae</taxon>
        <taxon>Saccharomyces</taxon>
    </lineage>
</organism>
<feature type="chain" id="PRO_0000247231" description="Pore and endoplasmic reticulum protein of 33 kDa">
    <location>
        <begin position="1"/>
        <end position="273"/>
    </location>
</feature>
<feature type="topological domain" description="Cytoplasmic" evidence="1">
    <location>
        <begin position="1"/>
        <end position="24"/>
    </location>
</feature>
<feature type="transmembrane region" description="Helical" evidence="1">
    <location>
        <begin position="25"/>
        <end position="45"/>
    </location>
</feature>
<feature type="topological domain" description="Lumenal" evidence="1">
    <location>
        <begin position="46"/>
        <end position="56"/>
    </location>
</feature>
<feature type="transmembrane region" description="Helical" evidence="1">
    <location>
        <begin position="57"/>
        <end position="74"/>
    </location>
</feature>
<feature type="topological domain" description="Cytoplasmic" evidence="1">
    <location>
        <begin position="75"/>
        <end position="98"/>
    </location>
</feature>
<feature type="transmembrane region" description="Helical" evidence="1">
    <location>
        <begin position="99"/>
        <end position="119"/>
    </location>
</feature>
<feature type="topological domain" description="Lumenal" evidence="1">
    <location>
        <begin position="120"/>
        <end position="126"/>
    </location>
</feature>
<feature type="transmembrane region" description="Helical" evidence="1">
    <location>
        <begin position="127"/>
        <end position="147"/>
    </location>
</feature>
<feature type="topological domain" description="Cytoplasmic" evidence="1">
    <location>
        <begin position="148"/>
        <end position="176"/>
    </location>
</feature>
<feature type="transmembrane region" description="Helical" evidence="1">
    <location>
        <begin position="177"/>
        <end position="197"/>
    </location>
</feature>
<feature type="topological domain" description="Lumenal" evidence="1">
    <location>
        <begin position="198"/>
        <end position="199"/>
    </location>
</feature>
<feature type="transmembrane region" description="Helical" evidence="1">
    <location>
        <begin position="200"/>
        <end position="220"/>
    </location>
</feature>
<feature type="topological domain" description="Cytoplasmic" evidence="1">
    <location>
        <begin position="221"/>
        <end position="273"/>
    </location>
</feature>
<accession>Q12144</accession>
<accession>D6VY65</accession>
<evidence type="ECO:0000255" key="1"/>
<evidence type="ECO:0000269" key="2">
    <source>
    </source>
</evidence>
<evidence type="ECO:0000305" key="3"/>
<comment type="subcellular location">
    <subcellularLocation>
        <location>Endoplasmic reticulum membrane</location>
        <topology>Multi-pass membrane protein</topology>
    </subcellularLocation>
    <subcellularLocation>
        <location>Nucleus</location>
        <location>Nuclear pore complex</location>
    </subcellularLocation>
</comment>
<comment type="miscellaneous">
    <text evidence="2">Present with 2240 molecules/cell in log phase SD medium.</text>
</comment>
<comment type="similarity">
    <text evidence="3">Belongs to the PER33/POM33 family.</text>
</comment>
<protein>
    <recommendedName>
        <fullName>Pore and endoplasmic reticulum protein of 33 kDa</fullName>
    </recommendedName>
</protein>
<sequence>MTVPRNRPMAPFGTIIKSRIKQPQFYWFIGHFLTIFNFIQFHLSITSKQNQLSCYRRSLFYISVTYAIVLYQFFKSDQLKFNFTLLRQEMKKLDNLQYFAMLFILFLLSQFNIIISGSLYSPVIFSIFHFLNYFKENLLPFLPLIPLNLKNLLNSKITVFIQNYNGFFLQMAQVFEIICGLRVGLFLVPFNFFLLLVRRANVSFEVVGTMLAGLTYVWFFKLRYLQSESMRQIFKQYVLRLDAYVSRTLPPYCSRLWNGYKNFVMTVFWKIPV</sequence>
<dbReference type="EMBL" id="X94607">
    <property type="protein sequence ID" value="CAA64310.1"/>
    <property type="molecule type" value="Genomic_DNA"/>
</dbReference>
<dbReference type="EMBL" id="Z73236">
    <property type="protein sequence ID" value="CAA97620.1"/>
    <property type="molecule type" value="Genomic_DNA"/>
</dbReference>
<dbReference type="EMBL" id="AY692677">
    <property type="protein sequence ID" value="AAT92696.1"/>
    <property type="molecule type" value="Genomic_DNA"/>
</dbReference>
<dbReference type="EMBL" id="BK006945">
    <property type="protein sequence ID" value="DAA09381.1"/>
    <property type="molecule type" value="Genomic_DNA"/>
</dbReference>
<dbReference type="PIR" id="S61637">
    <property type="entry name" value="S61637"/>
</dbReference>
<dbReference type="RefSeq" id="NP_013165.1">
    <property type="nucleotide sequence ID" value="NM_001181951.1"/>
</dbReference>
<dbReference type="SMR" id="Q12144"/>
<dbReference type="BioGRID" id="31338">
    <property type="interactions" value="247"/>
</dbReference>
<dbReference type="DIP" id="DIP-4778N"/>
<dbReference type="FunCoup" id="Q12144">
    <property type="interactions" value="124"/>
</dbReference>
<dbReference type="IntAct" id="Q12144">
    <property type="interactions" value="47"/>
</dbReference>
<dbReference type="MINT" id="Q12144"/>
<dbReference type="STRING" id="4932.YLR064W"/>
<dbReference type="PaxDb" id="4932-YLR064W"/>
<dbReference type="PeptideAtlas" id="Q12144"/>
<dbReference type="EnsemblFungi" id="YLR064W_mRNA">
    <property type="protein sequence ID" value="YLR064W"/>
    <property type="gene ID" value="YLR064W"/>
</dbReference>
<dbReference type="GeneID" id="850753"/>
<dbReference type="KEGG" id="sce:YLR064W"/>
<dbReference type="AGR" id="SGD:S000004054"/>
<dbReference type="SGD" id="S000004054">
    <property type="gene designation" value="PER33"/>
</dbReference>
<dbReference type="VEuPathDB" id="FungiDB:YLR064W"/>
<dbReference type="eggNOG" id="KOG4002">
    <property type="taxonomic scope" value="Eukaryota"/>
</dbReference>
<dbReference type="GeneTree" id="ENSGT00390000011368"/>
<dbReference type="HOGENOM" id="CLU_065417_3_0_1"/>
<dbReference type="InParanoid" id="Q12144"/>
<dbReference type="OMA" id="PQFYWFL"/>
<dbReference type="OrthoDB" id="5581259at2759"/>
<dbReference type="BioCyc" id="YEAST:G3O-32217-MONOMER"/>
<dbReference type="BioGRID-ORCS" id="850753">
    <property type="hits" value="0 hits in 10 CRISPR screens"/>
</dbReference>
<dbReference type="PRO" id="PR:Q12144"/>
<dbReference type="Proteomes" id="UP000002311">
    <property type="component" value="Chromosome XII"/>
</dbReference>
<dbReference type="RNAct" id="Q12144">
    <property type="molecule type" value="protein"/>
</dbReference>
<dbReference type="GO" id="GO:0005783">
    <property type="term" value="C:endoplasmic reticulum"/>
    <property type="evidence" value="ECO:0000314"/>
    <property type="project" value="SGD"/>
</dbReference>
<dbReference type="GO" id="GO:0005789">
    <property type="term" value="C:endoplasmic reticulum membrane"/>
    <property type="evidence" value="ECO:0007669"/>
    <property type="project" value="UniProtKB-SubCell"/>
</dbReference>
<dbReference type="GO" id="GO:0005635">
    <property type="term" value="C:nuclear envelope"/>
    <property type="evidence" value="ECO:0000314"/>
    <property type="project" value="SGD"/>
</dbReference>
<dbReference type="GO" id="GO:0005643">
    <property type="term" value="C:nuclear pore"/>
    <property type="evidence" value="ECO:0007669"/>
    <property type="project" value="UniProtKB-SubCell"/>
</dbReference>
<dbReference type="GO" id="GO:0071786">
    <property type="term" value="P:endoplasmic reticulum tubular network organization"/>
    <property type="evidence" value="ECO:0000318"/>
    <property type="project" value="GO_Central"/>
</dbReference>
<dbReference type="GO" id="GO:0061024">
    <property type="term" value="P:membrane organization"/>
    <property type="evidence" value="ECO:0000318"/>
    <property type="project" value="GO_Central"/>
</dbReference>
<dbReference type="GO" id="GO:0051028">
    <property type="term" value="P:mRNA transport"/>
    <property type="evidence" value="ECO:0007669"/>
    <property type="project" value="UniProtKB-KW"/>
</dbReference>
<dbReference type="GO" id="GO:0015031">
    <property type="term" value="P:protein transport"/>
    <property type="evidence" value="ECO:0007669"/>
    <property type="project" value="UniProtKB-KW"/>
</dbReference>
<dbReference type="InterPro" id="IPR051645">
    <property type="entry name" value="PER33/POM33_regulator"/>
</dbReference>
<dbReference type="InterPro" id="IPR005344">
    <property type="entry name" value="TMEM33/Pom33"/>
</dbReference>
<dbReference type="PANTHER" id="PTHR12703">
    <property type="entry name" value="TRANSMEMBRANE PROTEIN 33"/>
    <property type="match status" value="1"/>
</dbReference>
<dbReference type="PANTHER" id="PTHR12703:SF4">
    <property type="entry name" value="TRANSMEMBRANE PROTEIN 33"/>
    <property type="match status" value="1"/>
</dbReference>
<dbReference type="Pfam" id="PF03661">
    <property type="entry name" value="TMEM33_Pom33"/>
    <property type="match status" value="1"/>
</dbReference>
<name>PER33_YEAST</name>
<gene>
    <name type="primary">PER33</name>
    <name type="ordered locus">YLR064W</name>
    <name type="ORF">L2177</name>
</gene>
<reference key="1">
    <citation type="journal article" date="1997" name="Nature">
        <title>The nucleotide sequence of Saccharomyces cerevisiae chromosome XII.</title>
        <authorList>
            <person name="Johnston M."/>
            <person name="Hillier L.W."/>
            <person name="Riles L."/>
            <person name="Albermann K."/>
            <person name="Andre B."/>
            <person name="Ansorge W."/>
            <person name="Benes V."/>
            <person name="Brueckner M."/>
            <person name="Delius H."/>
            <person name="Dubois E."/>
            <person name="Duesterhoeft A."/>
            <person name="Entian K.-D."/>
            <person name="Floeth M."/>
            <person name="Goffeau A."/>
            <person name="Hebling U."/>
            <person name="Heumann K."/>
            <person name="Heuss-Neitzel D."/>
            <person name="Hilbert H."/>
            <person name="Hilger F."/>
            <person name="Kleine K."/>
            <person name="Koetter P."/>
            <person name="Louis E.J."/>
            <person name="Messenguy F."/>
            <person name="Mewes H.-W."/>
            <person name="Miosga T."/>
            <person name="Moestl D."/>
            <person name="Mueller-Auer S."/>
            <person name="Nentwich U."/>
            <person name="Obermaier B."/>
            <person name="Piravandi E."/>
            <person name="Pohl T.M."/>
            <person name="Portetelle D."/>
            <person name="Purnelle B."/>
            <person name="Rechmann S."/>
            <person name="Rieger M."/>
            <person name="Rinke M."/>
            <person name="Rose M."/>
            <person name="Scharfe M."/>
            <person name="Scherens B."/>
            <person name="Scholler P."/>
            <person name="Schwager C."/>
            <person name="Schwarz S."/>
            <person name="Underwood A.P."/>
            <person name="Urrestarazu L.A."/>
            <person name="Vandenbol M."/>
            <person name="Verhasselt P."/>
            <person name="Vierendeels F."/>
            <person name="Voet M."/>
            <person name="Volckaert G."/>
            <person name="Voss H."/>
            <person name="Wambutt R."/>
            <person name="Wedler E."/>
            <person name="Wedler H."/>
            <person name="Zimmermann F.K."/>
            <person name="Zollner A."/>
            <person name="Hani J."/>
            <person name="Hoheisel J.D."/>
        </authorList>
    </citation>
    <scope>NUCLEOTIDE SEQUENCE [LARGE SCALE GENOMIC DNA]</scope>
    <source>
        <strain>ATCC 204508 / S288c</strain>
    </source>
</reference>
<reference key="2">
    <citation type="journal article" date="2014" name="G3 (Bethesda)">
        <title>The reference genome sequence of Saccharomyces cerevisiae: Then and now.</title>
        <authorList>
            <person name="Engel S.R."/>
            <person name="Dietrich F.S."/>
            <person name="Fisk D.G."/>
            <person name="Binkley G."/>
            <person name="Balakrishnan R."/>
            <person name="Costanzo M.C."/>
            <person name="Dwight S.S."/>
            <person name="Hitz B.C."/>
            <person name="Karra K."/>
            <person name="Nash R.S."/>
            <person name="Weng S."/>
            <person name="Wong E.D."/>
            <person name="Lloyd P."/>
            <person name="Skrzypek M.S."/>
            <person name="Miyasato S.R."/>
            <person name="Simison M."/>
            <person name="Cherry J.M."/>
        </authorList>
    </citation>
    <scope>GENOME REANNOTATION</scope>
    <source>
        <strain>ATCC 204508 / S288c</strain>
    </source>
</reference>
<reference key="3">
    <citation type="journal article" date="2007" name="Genome Res.">
        <title>Approaching a complete repository of sequence-verified protein-encoding clones for Saccharomyces cerevisiae.</title>
        <authorList>
            <person name="Hu Y."/>
            <person name="Rolfs A."/>
            <person name="Bhullar B."/>
            <person name="Murthy T.V.S."/>
            <person name="Zhu C."/>
            <person name="Berger M.F."/>
            <person name="Camargo A.A."/>
            <person name="Kelley F."/>
            <person name="McCarron S."/>
            <person name="Jepson D."/>
            <person name="Richardson A."/>
            <person name="Raphael J."/>
            <person name="Moreira D."/>
            <person name="Taycher E."/>
            <person name="Zuo D."/>
            <person name="Mohr S."/>
            <person name="Kane M.F."/>
            <person name="Williamson J."/>
            <person name="Simpson A.J.G."/>
            <person name="Bulyk M.L."/>
            <person name="Harlow E."/>
            <person name="Marsischky G."/>
            <person name="Kolodner R.D."/>
            <person name="LaBaer J."/>
        </authorList>
    </citation>
    <scope>NUCLEOTIDE SEQUENCE [GENOMIC DNA]</scope>
    <source>
        <strain>ATCC 204508 / S288c</strain>
    </source>
</reference>
<reference key="4">
    <citation type="journal article" date="2003" name="Nature">
        <title>Global analysis of protein localization in budding yeast.</title>
        <authorList>
            <person name="Huh W.-K."/>
            <person name="Falvo J.V."/>
            <person name="Gerke L.C."/>
            <person name="Carroll A.S."/>
            <person name="Howson R.W."/>
            <person name="Weissman J.S."/>
            <person name="O'Shea E.K."/>
        </authorList>
    </citation>
    <scope>SUBCELLULAR LOCATION [LARGE SCALE ANALYSIS]</scope>
</reference>
<reference key="5">
    <citation type="journal article" date="2003" name="Nature">
        <title>Global analysis of protein expression in yeast.</title>
        <authorList>
            <person name="Ghaemmaghami S."/>
            <person name="Huh W.-K."/>
            <person name="Bower K."/>
            <person name="Howson R.W."/>
            <person name="Belle A."/>
            <person name="Dephoure N."/>
            <person name="O'Shea E.K."/>
            <person name="Weissman J.S."/>
        </authorList>
    </citation>
    <scope>LEVEL OF PROTEIN EXPRESSION [LARGE SCALE ANALYSIS]</scope>
</reference>
<reference key="6">
    <citation type="journal article" date="2006" name="Proc. Natl. Acad. Sci. U.S.A.">
        <title>A global topology map of the Saccharomyces cerevisiae membrane proteome.</title>
        <authorList>
            <person name="Kim H."/>
            <person name="Melen K."/>
            <person name="Oesterberg M."/>
            <person name="von Heijne G."/>
        </authorList>
    </citation>
    <scope>TOPOLOGY [LARGE SCALE ANALYSIS]</scope>
    <source>
        <strain>ATCC 208353 / W303-1A</strain>
    </source>
</reference>
<reference key="7">
    <citation type="journal article" date="2010" name="J. Cell Biol.">
        <title>Pom33, a novel transmembrane nucleoporin required for proper nuclear pore complex distribution.</title>
        <authorList>
            <person name="Chadrin A."/>
            <person name="Hess B."/>
            <person name="San Roman M."/>
            <person name="Gatti X."/>
            <person name="Lombard B."/>
            <person name="Loew D."/>
            <person name="Barral Y."/>
            <person name="Palancade B."/>
            <person name="Doye V."/>
        </authorList>
    </citation>
    <scope>SUBCELLULAR LOCATION</scope>
</reference>
<keyword id="KW-0256">Endoplasmic reticulum</keyword>
<keyword id="KW-0472">Membrane</keyword>
<keyword id="KW-0509">mRNA transport</keyword>
<keyword id="KW-0906">Nuclear pore complex</keyword>
<keyword id="KW-0539">Nucleus</keyword>
<keyword id="KW-0653">Protein transport</keyword>
<keyword id="KW-1185">Reference proteome</keyword>
<keyword id="KW-0811">Translocation</keyword>
<keyword id="KW-0812">Transmembrane</keyword>
<keyword id="KW-1133">Transmembrane helix</keyword>
<keyword id="KW-0813">Transport</keyword>
<proteinExistence type="evidence at protein level"/>